<reference key="1">
    <citation type="journal article" date="2007" name="Environ. Microbiol.">
        <title>Whole-genome analysis of the ammonia-oxidizing bacterium, Nitrosomonas eutropha C91: implications for niche adaptation.</title>
        <authorList>
            <person name="Stein L.Y."/>
            <person name="Arp D.J."/>
            <person name="Berube P.M."/>
            <person name="Chain P.S."/>
            <person name="Hauser L."/>
            <person name="Jetten M.S."/>
            <person name="Klotz M.G."/>
            <person name="Larimer F.W."/>
            <person name="Norton J.M."/>
            <person name="Op den Camp H.J.M."/>
            <person name="Shin M."/>
            <person name="Wei X."/>
        </authorList>
    </citation>
    <scope>NUCLEOTIDE SEQUENCE [LARGE SCALE GENOMIC DNA]</scope>
    <source>
        <strain>DSM 101675 / C91 / Nm57</strain>
    </source>
</reference>
<feature type="chain" id="PRO_0000320872" description="Protein translocase subunit SecA">
    <location>
        <begin position="1"/>
        <end position="909"/>
    </location>
</feature>
<feature type="region of interest" description="Disordered" evidence="2">
    <location>
        <begin position="567"/>
        <end position="586"/>
    </location>
</feature>
<feature type="region of interest" description="Disordered" evidence="2">
    <location>
        <begin position="859"/>
        <end position="909"/>
    </location>
</feature>
<feature type="compositionally biased region" description="Basic and acidic residues" evidence="2">
    <location>
        <begin position="865"/>
        <end position="889"/>
    </location>
</feature>
<feature type="compositionally biased region" description="Basic residues" evidence="2">
    <location>
        <begin position="899"/>
        <end position="909"/>
    </location>
</feature>
<feature type="binding site" evidence="1">
    <location>
        <position position="87"/>
    </location>
    <ligand>
        <name>ATP</name>
        <dbReference type="ChEBI" id="CHEBI:30616"/>
    </ligand>
</feature>
<feature type="binding site" evidence="1">
    <location>
        <begin position="105"/>
        <end position="109"/>
    </location>
    <ligand>
        <name>ATP</name>
        <dbReference type="ChEBI" id="CHEBI:30616"/>
    </ligand>
</feature>
<feature type="binding site" evidence="1">
    <location>
        <position position="507"/>
    </location>
    <ligand>
        <name>ATP</name>
        <dbReference type="ChEBI" id="CHEBI:30616"/>
    </ligand>
</feature>
<feature type="binding site" evidence="1">
    <location>
        <position position="893"/>
    </location>
    <ligand>
        <name>Zn(2+)</name>
        <dbReference type="ChEBI" id="CHEBI:29105"/>
    </ligand>
</feature>
<feature type="binding site" evidence="1">
    <location>
        <position position="895"/>
    </location>
    <ligand>
        <name>Zn(2+)</name>
        <dbReference type="ChEBI" id="CHEBI:29105"/>
    </ligand>
</feature>
<feature type="binding site" evidence="1">
    <location>
        <position position="904"/>
    </location>
    <ligand>
        <name>Zn(2+)</name>
        <dbReference type="ChEBI" id="CHEBI:29105"/>
    </ligand>
</feature>
<feature type="binding site" evidence="1">
    <location>
        <position position="905"/>
    </location>
    <ligand>
        <name>Zn(2+)</name>
        <dbReference type="ChEBI" id="CHEBI:29105"/>
    </ligand>
</feature>
<organism>
    <name type="scientific">Nitrosomonas eutropha (strain DSM 101675 / C91 / Nm57)</name>
    <dbReference type="NCBI Taxonomy" id="335283"/>
    <lineage>
        <taxon>Bacteria</taxon>
        <taxon>Pseudomonadati</taxon>
        <taxon>Pseudomonadota</taxon>
        <taxon>Betaproteobacteria</taxon>
        <taxon>Nitrosomonadales</taxon>
        <taxon>Nitrosomonadaceae</taxon>
        <taxon>Nitrosomonas</taxon>
    </lineage>
</organism>
<keyword id="KW-0067">ATP-binding</keyword>
<keyword id="KW-0997">Cell inner membrane</keyword>
<keyword id="KW-1003">Cell membrane</keyword>
<keyword id="KW-0963">Cytoplasm</keyword>
<keyword id="KW-0472">Membrane</keyword>
<keyword id="KW-0479">Metal-binding</keyword>
<keyword id="KW-0547">Nucleotide-binding</keyword>
<keyword id="KW-0653">Protein transport</keyword>
<keyword id="KW-1278">Translocase</keyword>
<keyword id="KW-0811">Translocation</keyword>
<keyword id="KW-0813">Transport</keyword>
<keyword id="KW-0862">Zinc</keyword>
<accession>Q0AH18</accession>
<sequence>MLSNLLKGIFGSRNDRLVKQYSRIVRTINELEAVISPLSDEELRDKTSEFKQRISNGEKLDQLLPEAFAVVREASKRVLGMRHFDVQLIGGMVLHEGKIAEMRTGEGKTLMATLPIYLNALSGKGVHIVTVNDYLAKRDAEWMGQIYQFLGLSVGVVLSQMPHEDKQAAYGADITYGTNNEYGFDYLRDNMVGHSAERVQRVLNFAIVDEVDSILIDEARTPLIISGMAEGDTEVYKRVDVLIPRLTRQKDENSPGDYSVDEKTQQVLLSEEGFIHAEKLLGEVGLLPAESSLYDPANITLIHHLNAGLRAHALYNRDQHYVVQNDEVVIVDEFTGRLMPGRRWSEGLHQAVEAKENVSIQKENQTLASITFQNYFRMYEKLAGMTGTADTEAFEFQQIYGLETVVIPTHRPIAREDRMDQVFRTAREKYQAIIADIKSCYERGQPVLVGTGSIENNELLSTMLTKEKLPHQVLNAKQHEREADIIAQAGQSKMVTIATNMAGRGTDIVLGGNLEQVINRIRVDDALDDMTKTEKIKETRQAWQVRHDEVIKLGGLHIIGTERHESRRIDNQLRGRSGRQGDPGSSRFYLSLEDPLLRIFSSDRVANIMTRLKMPEGEAIEHPWVTRAIENAQRKVEARNFDIRKQLLEYDDVANDQRKVIYQQRNELLDAEQGISETVSAIRESVINQLIGLYIPAQSIEEQWDVPGLEKALASEFLLRIPVQEWLEADSELHEENLRSRIMESVNTSYQGKVEQVGASIMNQYERMVMLHSIDSHWREHLAALDHLRQGIHLRGYAQQNPKQEYKREAFELFAGMLDAIKADVTKILMTVQIRSEQQVESVAETSTPKNLQYHHAAYSEAEEEHQSVTEGHEAKQQPFVRKSDKIGRNDPCPCGSGRKYKQCHGKLD</sequence>
<name>SECA_NITEC</name>
<protein>
    <recommendedName>
        <fullName evidence="1">Protein translocase subunit SecA</fullName>
        <ecNumber evidence="1">7.4.2.8</ecNumber>
    </recommendedName>
</protein>
<gene>
    <name evidence="1" type="primary">secA</name>
    <name type="ordered locus">Neut_1109</name>
</gene>
<evidence type="ECO:0000255" key="1">
    <source>
        <dbReference type="HAMAP-Rule" id="MF_01382"/>
    </source>
</evidence>
<evidence type="ECO:0000256" key="2">
    <source>
        <dbReference type="SAM" id="MobiDB-lite"/>
    </source>
</evidence>
<dbReference type="EC" id="7.4.2.8" evidence="1"/>
<dbReference type="EMBL" id="CP000450">
    <property type="protein sequence ID" value="ABI59364.1"/>
    <property type="molecule type" value="Genomic_DNA"/>
</dbReference>
<dbReference type="RefSeq" id="WP_011634184.1">
    <property type="nucleotide sequence ID" value="NC_008344.1"/>
</dbReference>
<dbReference type="SMR" id="Q0AH18"/>
<dbReference type="STRING" id="335283.Neut_1109"/>
<dbReference type="KEGG" id="net:Neut_1109"/>
<dbReference type="eggNOG" id="COG0653">
    <property type="taxonomic scope" value="Bacteria"/>
</dbReference>
<dbReference type="HOGENOM" id="CLU_005314_3_0_4"/>
<dbReference type="OrthoDB" id="9805579at2"/>
<dbReference type="Proteomes" id="UP000001966">
    <property type="component" value="Chromosome"/>
</dbReference>
<dbReference type="GO" id="GO:0031522">
    <property type="term" value="C:cell envelope Sec protein transport complex"/>
    <property type="evidence" value="ECO:0007669"/>
    <property type="project" value="TreeGrafter"/>
</dbReference>
<dbReference type="GO" id="GO:0005829">
    <property type="term" value="C:cytosol"/>
    <property type="evidence" value="ECO:0007669"/>
    <property type="project" value="TreeGrafter"/>
</dbReference>
<dbReference type="GO" id="GO:0005886">
    <property type="term" value="C:plasma membrane"/>
    <property type="evidence" value="ECO:0007669"/>
    <property type="project" value="UniProtKB-SubCell"/>
</dbReference>
<dbReference type="GO" id="GO:0005524">
    <property type="term" value="F:ATP binding"/>
    <property type="evidence" value="ECO:0007669"/>
    <property type="project" value="UniProtKB-UniRule"/>
</dbReference>
<dbReference type="GO" id="GO:0046872">
    <property type="term" value="F:metal ion binding"/>
    <property type="evidence" value="ECO:0007669"/>
    <property type="project" value="UniProtKB-KW"/>
</dbReference>
<dbReference type="GO" id="GO:0008564">
    <property type="term" value="F:protein-exporting ATPase activity"/>
    <property type="evidence" value="ECO:0007669"/>
    <property type="project" value="UniProtKB-EC"/>
</dbReference>
<dbReference type="GO" id="GO:0065002">
    <property type="term" value="P:intracellular protein transmembrane transport"/>
    <property type="evidence" value="ECO:0007669"/>
    <property type="project" value="UniProtKB-UniRule"/>
</dbReference>
<dbReference type="GO" id="GO:0017038">
    <property type="term" value="P:protein import"/>
    <property type="evidence" value="ECO:0007669"/>
    <property type="project" value="InterPro"/>
</dbReference>
<dbReference type="GO" id="GO:0006605">
    <property type="term" value="P:protein targeting"/>
    <property type="evidence" value="ECO:0007669"/>
    <property type="project" value="UniProtKB-UniRule"/>
</dbReference>
<dbReference type="GO" id="GO:0043952">
    <property type="term" value="P:protein transport by the Sec complex"/>
    <property type="evidence" value="ECO:0007669"/>
    <property type="project" value="TreeGrafter"/>
</dbReference>
<dbReference type="CDD" id="cd17928">
    <property type="entry name" value="DEXDc_SecA"/>
    <property type="match status" value="1"/>
</dbReference>
<dbReference type="CDD" id="cd18803">
    <property type="entry name" value="SF2_C_secA"/>
    <property type="match status" value="1"/>
</dbReference>
<dbReference type="FunFam" id="3.40.50.300:FF:000081">
    <property type="entry name" value="Preprotein translocase subunit SecA"/>
    <property type="match status" value="1"/>
</dbReference>
<dbReference type="FunFam" id="3.40.50.300:FF:000113">
    <property type="entry name" value="Preprotein translocase subunit SecA"/>
    <property type="match status" value="1"/>
</dbReference>
<dbReference type="FunFam" id="3.90.1440.10:FF:000001">
    <property type="entry name" value="Preprotein translocase subunit SecA"/>
    <property type="match status" value="1"/>
</dbReference>
<dbReference type="FunFam" id="1.10.3060.10:FF:000003">
    <property type="entry name" value="Protein translocase subunit SecA"/>
    <property type="match status" value="1"/>
</dbReference>
<dbReference type="Gene3D" id="1.10.3060.10">
    <property type="entry name" value="Helical scaffold and wing domains of SecA"/>
    <property type="match status" value="1"/>
</dbReference>
<dbReference type="Gene3D" id="3.40.50.300">
    <property type="entry name" value="P-loop containing nucleotide triphosphate hydrolases"/>
    <property type="match status" value="2"/>
</dbReference>
<dbReference type="Gene3D" id="3.90.1440.10">
    <property type="entry name" value="SecA, preprotein cross-linking domain"/>
    <property type="match status" value="1"/>
</dbReference>
<dbReference type="HAMAP" id="MF_01382">
    <property type="entry name" value="SecA"/>
    <property type="match status" value="1"/>
</dbReference>
<dbReference type="InterPro" id="IPR014001">
    <property type="entry name" value="Helicase_ATP-bd"/>
</dbReference>
<dbReference type="InterPro" id="IPR001650">
    <property type="entry name" value="Helicase_C-like"/>
</dbReference>
<dbReference type="InterPro" id="IPR027417">
    <property type="entry name" value="P-loop_NTPase"/>
</dbReference>
<dbReference type="InterPro" id="IPR004027">
    <property type="entry name" value="SEC_C_motif"/>
</dbReference>
<dbReference type="InterPro" id="IPR000185">
    <property type="entry name" value="SecA"/>
</dbReference>
<dbReference type="InterPro" id="IPR020937">
    <property type="entry name" value="SecA_CS"/>
</dbReference>
<dbReference type="InterPro" id="IPR011115">
    <property type="entry name" value="SecA_DEAD"/>
</dbReference>
<dbReference type="InterPro" id="IPR014018">
    <property type="entry name" value="SecA_motor_DEAD"/>
</dbReference>
<dbReference type="InterPro" id="IPR011130">
    <property type="entry name" value="SecA_preprotein_X-link_dom"/>
</dbReference>
<dbReference type="InterPro" id="IPR044722">
    <property type="entry name" value="SecA_SF2_C"/>
</dbReference>
<dbReference type="InterPro" id="IPR011116">
    <property type="entry name" value="SecA_Wing/Scaffold"/>
</dbReference>
<dbReference type="InterPro" id="IPR036266">
    <property type="entry name" value="SecA_Wing/Scaffold_sf"/>
</dbReference>
<dbReference type="InterPro" id="IPR036670">
    <property type="entry name" value="SecA_X-link_sf"/>
</dbReference>
<dbReference type="NCBIfam" id="NF009538">
    <property type="entry name" value="PRK12904.1"/>
    <property type="match status" value="1"/>
</dbReference>
<dbReference type="NCBIfam" id="TIGR00963">
    <property type="entry name" value="secA"/>
    <property type="match status" value="1"/>
</dbReference>
<dbReference type="PANTHER" id="PTHR30612:SF0">
    <property type="entry name" value="CHLOROPLAST PROTEIN-TRANSPORTING ATPASE"/>
    <property type="match status" value="1"/>
</dbReference>
<dbReference type="PANTHER" id="PTHR30612">
    <property type="entry name" value="SECA INNER MEMBRANE COMPONENT OF SEC PROTEIN SECRETION SYSTEM"/>
    <property type="match status" value="1"/>
</dbReference>
<dbReference type="Pfam" id="PF21090">
    <property type="entry name" value="P-loop_SecA"/>
    <property type="match status" value="1"/>
</dbReference>
<dbReference type="Pfam" id="PF02810">
    <property type="entry name" value="SEC-C"/>
    <property type="match status" value="1"/>
</dbReference>
<dbReference type="Pfam" id="PF07517">
    <property type="entry name" value="SecA_DEAD"/>
    <property type="match status" value="1"/>
</dbReference>
<dbReference type="Pfam" id="PF01043">
    <property type="entry name" value="SecA_PP_bind"/>
    <property type="match status" value="1"/>
</dbReference>
<dbReference type="Pfam" id="PF07516">
    <property type="entry name" value="SecA_SW"/>
    <property type="match status" value="1"/>
</dbReference>
<dbReference type="PRINTS" id="PR00906">
    <property type="entry name" value="SECA"/>
</dbReference>
<dbReference type="SMART" id="SM00957">
    <property type="entry name" value="SecA_DEAD"/>
    <property type="match status" value="1"/>
</dbReference>
<dbReference type="SMART" id="SM00958">
    <property type="entry name" value="SecA_PP_bind"/>
    <property type="match status" value="1"/>
</dbReference>
<dbReference type="SUPFAM" id="SSF81886">
    <property type="entry name" value="Helical scaffold and wing domains of SecA"/>
    <property type="match status" value="1"/>
</dbReference>
<dbReference type="SUPFAM" id="SSF52540">
    <property type="entry name" value="P-loop containing nucleoside triphosphate hydrolases"/>
    <property type="match status" value="2"/>
</dbReference>
<dbReference type="SUPFAM" id="SSF81767">
    <property type="entry name" value="Pre-protein crosslinking domain of SecA"/>
    <property type="match status" value="1"/>
</dbReference>
<dbReference type="PROSITE" id="PS01312">
    <property type="entry name" value="SECA"/>
    <property type="match status" value="1"/>
</dbReference>
<dbReference type="PROSITE" id="PS51196">
    <property type="entry name" value="SECA_MOTOR_DEAD"/>
    <property type="match status" value="1"/>
</dbReference>
<comment type="function">
    <text evidence="1">Part of the Sec protein translocase complex. Interacts with the SecYEG preprotein conducting channel. Has a central role in coupling the hydrolysis of ATP to the transfer of proteins into and across the cell membrane, serving both as a receptor for the preprotein-SecB complex and as an ATP-driven molecular motor driving the stepwise translocation of polypeptide chains across the membrane.</text>
</comment>
<comment type="catalytic activity">
    <reaction evidence="1">
        <text>ATP + H2O + cellular proteinSide 1 = ADP + phosphate + cellular proteinSide 2.</text>
        <dbReference type="EC" id="7.4.2.8"/>
    </reaction>
</comment>
<comment type="cofactor">
    <cofactor evidence="1">
        <name>Zn(2+)</name>
        <dbReference type="ChEBI" id="CHEBI:29105"/>
    </cofactor>
    <text evidence="1">May bind 1 zinc ion per subunit.</text>
</comment>
<comment type="subunit">
    <text evidence="1">Monomer and homodimer. Part of the essential Sec protein translocation apparatus which comprises SecA, SecYEG and auxiliary proteins SecDF-YajC and YidC.</text>
</comment>
<comment type="subcellular location">
    <subcellularLocation>
        <location evidence="1">Cell inner membrane</location>
        <topology evidence="1">Peripheral membrane protein</topology>
        <orientation evidence="1">Cytoplasmic side</orientation>
    </subcellularLocation>
    <subcellularLocation>
        <location evidence="1">Cytoplasm</location>
    </subcellularLocation>
    <text evidence="1">Distribution is 50-50.</text>
</comment>
<comment type="similarity">
    <text evidence="1">Belongs to the SecA family.</text>
</comment>
<proteinExistence type="inferred from homology"/>